<name>DDI1_RAT</name>
<accession>A0JPP7</accession>
<comment type="function">
    <text evidence="1 2">Probable aspartic protease (By similarity). Seems to act as a proteasomal shuttle which links the proteasome and replication fork proteins like RTF2. Required, with DDI2, for cellular survival following replication stress. Together or redudantly with DDI2, removes RTF2 from stalled forks to allow cell cycle progression after replication stress and maintains genome integrity (By similarity).</text>
</comment>
<comment type="similarity">
    <text evidence="5">Belongs to the DDI1 family.</text>
</comment>
<evidence type="ECO:0000250" key="1">
    <source>
        <dbReference type="UniProtKB" id="I7HUG0"/>
    </source>
</evidence>
<evidence type="ECO:0000250" key="2">
    <source>
        <dbReference type="UniProtKB" id="Q8WTU0"/>
    </source>
</evidence>
<evidence type="ECO:0000255" key="3">
    <source>
        <dbReference type="PROSITE-ProRule" id="PRU00214"/>
    </source>
</evidence>
<evidence type="ECO:0000256" key="4">
    <source>
        <dbReference type="SAM" id="MobiDB-lite"/>
    </source>
</evidence>
<evidence type="ECO:0000305" key="5"/>
<feature type="chain" id="PRO_0000287089" description="Protein DDI1 homolog 1">
    <location>
        <begin position="1"/>
        <end position="408"/>
    </location>
</feature>
<feature type="domain" description="Ubiquitin-like" evidence="3">
    <location>
        <begin position="1"/>
        <end position="81"/>
    </location>
</feature>
<feature type="region of interest" description="Disordered" evidence="4">
    <location>
        <begin position="77"/>
        <end position="135"/>
    </location>
</feature>
<feature type="region of interest" description="Disordered" evidence="4">
    <location>
        <begin position="386"/>
        <end position="408"/>
    </location>
</feature>
<feature type="compositionally biased region" description="Polar residues" evidence="4">
    <location>
        <begin position="96"/>
        <end position="109"/>
    </location>
</feature>
<feature type="compositionally biased region" description="Basic residues" evidence="4">
    <location>
        <begin position="110"/>
        <end position="123"/>
    </location>
</feature>
<feature type="compositionally biased region" description="Basic residues" evidence="4">
    <location>
        <begin position="398"/>
        <end position="408"/>
    </location>
</feature>
<feature type="active site" evidence="5">
    <location>
        <position position="266"/>
    </location>
</feature>
<gene>
    <name type="primary">Ddi1</name>
</gene>
<proteinExistence type="evidence at protein level"/>
<keyword id="KW-0064">Aspartyl protease</keyword>
<keyword id="KW-0378">Hydrolase</keyword>
<keyword id="KW-0645">Protease</keyword>
<keyword id="KW-1185">Reference proteome</keyword>
<organism>
    <name type="scientific">Rattus norvegicus</name>
    <name type="common">Rat</name>
    <dbReference type="NCBI Taxonomy" id="10116"/>
    <lineage>
        <taxon>Eukaryota</taxon>
        <taxon>Metazoa</taxon>
        <taxon>Chordata</taxon>
        <taxon>Craniata</taxon>
        <taxon>Vertebrata</taxon>
        <taxon>Euteleostomi</taxon>
        <taxon>Mammalia</taxon>
        <taxon>Eutheria</taxon>
        <taxon>Euarchontoglires</taxon>
        <taxon>Glires</taxon>
        <taxon>Rodentia</taxon>
        <taxon>Myomorpha</taxon>
        <taxon>Muroidea</taxon>
        <taxon>Muridae</taxon>
        <taxon>Murinae</taxon>
        <taxon>Rattus</taxon>
    </lineage>
</organism>
<sequence length="408" mass="45451">MLITVYCVRRDLTEVTFSLQVNPDFELSNFRVLCELESGVPAEEAQIVYMEQLLTDDHCSLGSYGLKDGDMVVLLQKDNVGPRPPGRAPNHPRTDFTGSGSAVPGTSSSRHPHPHQHHHHQHQRIPSTQQAHGLASGENMAFAQDLNSPALIRSMLLSNPHDLSLLKERNPALAEALLSGNLETFSQVLVEQQRERAMREQEMFRLYSADPFDQETQARIEEEIRQQNIEENMNIAMEEAPESFGQVAMLYINCKVNGHPLKAFVDSGAQMTIMSQACAERCNIMRLVDRRWAGVAKGVGTQRIMGRVHLAQIQIEGDFLQCSFSILEEQPMDILLGLDMLRRHQCSIDLKKNVLVIGTTGSQTHFLPEGELPLCAKLLSGAVQEDSSDKEVAGSIKHPVKGPGRKKH</sequence>
<protein>
    <recommendedName>
        <fullName>Protein DDI1 homolog 1</fullName>
        <ecNumber evidence="1">3.4.23.-</ecNumber>
    </recommendedName>
</protein>
<reference key="1">
    <citation type="journal article" date="2004" name="Genome Res.">
        <title>The status, quality, and expansion of the NIH full-length cDNA project: the Mammalian Gene Collection (MGC).</title>
        <authorList>
            <consortium name="The MGC Project Team"/>
        </authorList>
    </citation>
    <scope>NUCLEOTIDE SEQUENCE [LARGE SCALE MRNA]</scope>
    <source>
        <tissue>Testis</tissue>
    </source>
</reference>
<reference key="2">
    <citation type="journal article" date="2012" name="Nat. Commun.">
        <title>Quantitative maps of protein phosphorylation sites across 14 different rat organs and tissues.</title>
        <authorList>
            <person name="Lundby A."/>
            <person name="Secher A."/>
            <person name="Lage K."/>
            <person name="Nordsborg N.B."/>
            <person name="Dmytriyev A."/>
            <person name="Lundby C."/>
            <person name="Olsen J.V."/>
        </authorList>
    </citation>
    <scope>IDENTIFICATION BY MASS SPECTROMETRY [LARGE SCALE ANALYSIS]</scope>
</reference>
<dbReference type="EC" id="3.4.23.-" evidence="1"/>
<dbReference type="EMBL" id="BC127531">
    <property type="protein sequence ID" value="AAI27532.1"/>
    <property type="molecule type" value="mRNA"/>
</dbReference>
<dbReference type="RefSeq" id="NP_001078944.1">
    <property type="nucleotide sequence ID" value="NM_001085475.1"/>
</dbReference>
<dbReference type="SMR" id="A0JPP7"/>
<dbReference type="BioGRID" id="266267">
    <property type="interactions" value="1"/>
</dbReference>
<dbReference type="FunCoup" id="A0JPP7">
    <property type="interactions" value="280"/>
</dbReference>
<dbReference type="MEROPS" id="A28.A01"/>
<dbReference type="PhosphoSitePlus" id="A0JPP7"/>
<dbReference type="PeptideAtlas" id="A0JPP7"/>
<dbReference type="Ensembl" id="ENSRNOT00000039868.4">
    <property type="protein sequence ID" value="ENSRNOP00000091127.1"/>
    <property type="gene ID" value="ENSRNOG00000022081.5"/>
</dbReference>
<dbReference type="GeneID" id="367012"/>
<dbReference type="KEGG" id="rno:367012"/>
<dbReference type="UCSC" id="RGD:1559430">
    <property type="organism name" value="rat"/>
</dbReference>
<dbReference type="AGR" id="RGD:1559430"/>
<dbReference type="CTD" id="414301"/>
<dbReference type="RGD" id="1559430">
    <property type="gene designation" value="Ddi1"/>
</dbReference>
<dbReference type="GeneTree" id="ENSGT00950000182999"/>
<dbReference type="InParanoid" id="A0JPP7"/>
<dbReference type="OMA" id="LYTADPF"/>
<dbReference type="OrthoDB" id="57980at9989"/>
<dbReference type="PhylomeDB" id="A0JPP7"/>
<dbReference type="TreeFam" id="TF333421"/>
<dbReference type="PRO" id="PR:A0JPP7"/>
<dbReference type="Proteomes" id="UP000002494">
    <property type="component" value="Chromosome 8"/>
</dbReference>
<dbReference type="GO" id="GO:0004190">
    <property type="term" value="F:aspartic-type endopeptidase activity"/>
    <property type="evidence" value="ECO:0007669"/>
    <property type="project" value="UniProtKB-KW"/>
</dbReference>
<dbReference type="GO" id="GO:0072711">
    <property type="term" value="P:cellular response to hydroxyurea"/>
    <property type="evidence" value="ECO:0000250"/>
    <property type="project" value="UniProtKB"/>
</dbReference>
<dbReference type="GO" id="GO:0010498">
    <property type="term" value="P:proteasomal protein catabolic process"/>
    <property type="evidence" value="ECO:0000250"/>
    <property type="project" value="UniProtKB"/>
</dbReference>
<dbReference type="GO" id="GO:0097752">
    <property type="term" value="P:regulation of DNA stability"/>
    <property type="evidence" value="ECO:0000250"/>
    <property type="project" value="UniProtKB"/>
</dbReference>
<dbReference type="GO" id="GO:0031647">
    <property type="term" value="P:regulation of protein stability"/>
    <property type="evidence" value="ECO:0000250"/>
    <property type="project" value="UniProtKB"/>
</dbReference>
<dbReference type="CDD" id="cd05479">
    <property type="entry name" value="RP_DDI"/>
    <property type="match status" value="1"/>
</dbReference>
<dbReference type="CDD" id="cd01796">
    <property type="entry name" value="Ubl_Ddi1_like"/>
    <property type="match status" value="1"/>
</dbReference>
<dbReference type="FunFam" id="2.40.70.10:FF:000005">
    <property type="entry name" value="DNA damage inducible 1 homolog 2"/>
    <property type="match status" value="1"/>
</dbReference>
<dbReference type="FunFam" id="3.10.20.90:FF:000107">
    <property type="entry name" value="protein DDI1 homolog 2 isoform X1"/>
    <property type="match status" value="1"/>
</dbReference>
<dbReference type="Gene3D" id="2.40.70.10">
    <property type="entry name" value="Acid Proteases"/>
    <property type="match status" value="1"/>
</dbReference>
<dbReference type="Gene3D" id="3.10.20.90">
    <property type="entry name" value="Phosphatidylinositol 3-kinase Catalytic Subunit, Chain A, domain 1"/>
    <property type="match status" value="1"/>
</dbReference>
<dbReference type="InterPro" id="IPR033882">
    <property type="entry name" value="DDI1_N"/>
</dbReference>
<dbReference type="InterPro" id="IPR019103">
    <property type="entry name" value="Peptidase_aspartic_DDI1-type"/>
</dbReference>
<dbReference type="InterPro" id="IPR021109">
    <property type="entry name" value="Peptidase_aspartic_dom_sf"/>
</dbReference>
<dbReference type="InterPro" id="IPR000626">
    <property type="entry name" value="Ubiquitin-like_dom"/>
</dbReference>
<dbReference type="InterPro" id="IPR029071">
    <property type="entry name" value="Ubiquitin-like_domsf"/>
</dbReference>
<dbReference type="PANTHER" id="PTHR15397:SF3">
    <property type="entry name" value="DNA DAMAGE INDUCIBLE 1 HOMOLOG 2"/>
    <property type="match status" value="1"/>
</dbReference>
<dbReference type="PANTHER" id="PTHR15397">
    <property type="entry name" value="SODIUM-GLUCOSE COTRANSPORTER REGULATORY PROTEIN -RELATED"/>
    <property type="match status" value="1"/>
</dbReference>
<dbReference type="Pfam" id="PF09668">
    <property type="entry name" value="Asp_protease"/>
    <property type="match status" value="1"/>
</dbReference>
<dbReference type="Pfam" id="PF24669">
    <property type="entry name" value="Ddi2_HDD"/>
    <property type="match status" value="1"/>
</dbReference>
<dbReference type="Pfam" id="PF00240">
    <property type="entry name" value="ubiquitin"/>
    <property type="match status" value="1"/>
</dbReference>
<dbReference type="SUPFAM" id="SSF50630">
    <property type="entry name" value="Acid proteases"/>
    <property type="match status" value="1"/>
</dbReference>
<dbReference type="SUPFAM" id="SSF54236">
    <property type="entry name" value="Ubiquitin-like"/>
    <property type="match status" value="1"/>
</dbReference>
<dbReference type="PROSITE" id="PS50053">
    <property type="entry name" value="UBIQUITIN_2"/>
    <property type="match status" value="1"/>
</dbReference>